<evidence type="ECO:0000255" key="1">
    <source>
        <dbReference type="HAMAP-Rule" id="MF_01361"/>
    </source>
</evidence>
<accession>B5FTC0</accession>
<name>YTJA_SALDC</name>
<keyword id="KW-1003">Cell membrane</keyword>
<keyword id="KW-0472">Membrane</keyword>
<keyword id="KW-0812">Transmembrane</keyword>
<keyword id="KW-1133">Transmembrane helix</keyword>
<gene>
    <name evidence="1" type="primary">ytjA</name>
    <name type="ordered locus">SeD_A4977</name>
</gene>
<proteinExistence type="inferred from homology"/>
<dbReference type="EMBL" id="CP001144">
    <property type="protein sequence ID" value="ACH77054.1"/>
    <property type="molecule type" value="Genomic_DNA"/>
</dbReference>
<dbReference type="RefSeq" id="WP_000490276.1">
    <property type="nucleotide sequence ID" value="NC_011205.1"/>
</dbReference>
<dbReference type="KEGG" id="sed:SeD_A4977"/>
<dbReference type="HOGENOM" id="CLU_187346_2_0_6"/>
<dbReference type="Proteomes" id="UP000008322">
    <property type="component" value="Chromosome"/>
</dbReference>
<dbReference type="GO" id="GO:0005886">
    <property type="term" value="C:plasma membrane"/>
    <property type="evidence" value="ECO:0007669"/>
    <property type="project" value="UniProtKB-SubCell"/>
</dbReference>
<dbReference type="HAMAP" id="MF_01361">
    <property type="entry name" value="UPF0391"/>
    <property type="match status" value="1"/>
</dbReference>
<dbReference type="InterPro" id="IPR009760">
    <property type="entry name" value="DUF1328"/>
</dbReference>
<dbReference type="NCBIfam" id="NF010229">
    <property type="entry name" value="PRK13682.1-4"/>
    <property type="match status" value="1"/>
</dbReference>
<dbReference type="NCBIfam" id="NF010230">
    <property type="entry name" value="PRK13682.1-5"/>
    <property type="match status" value="1"/>
</dbReference>
<dbReference type="Pfam" id="PF07043">
    <property type="entry name" value="DUF1328"/>
    <property type="match status" value="1"/>
</dbReference>
<dbReference type="PIRSF" id="PIRSF036466">
    <property type="entry name" value="UCP036466"/>
    <property type="match status" value="1"/>
</dbReference>
<protein>
    <recommendedName>
        <fullName evidence="1">UPF0391 membrane protein YtjA</fullName>
    </recommendedName>
</protein>
<sequence>MFRWGIIFLVIALIAAALGFGGLAGTAAGAAKIVFVVGIVLFLVSLFMGRKRP</sequence>
<organism>
    <name type="scientific">Salmonella dublin (strain CT_02021853)</name>
    <dbReference type="NCBI Taxonomy" id="439851"/>
    <lineage>
        <taxon>Bacteria</taxon>
        <taxon>Pseudomonadati</taxon>
        <taxon>Pseudomonadota</taxon>
        <taxon>Gammaproteobacteria</taxon>
        <taxon>Enterobacterales</taxon>
        <taxon>Enterobacteriaceae</taxon>
        <taxon>Salmonella</taxon>
    </lineage>
</organism>
<feature type="chain" id="PRO_1000143722" description="UPF0391 membrane protein YtjA">
    <location>
        <begin position="1"/>
        <end position="53"/>
    </location>
</feature>
<feature type="transmembrane region" description="Helical" evidence="1">
    <location>
        <begin position="4"/>
        <end position="24"/>
    </location>
</feature>
<feature type="transmembrane region" description="Helical" evidence="1">
    <location>
        <begin position="30"/>
        <end position="48"/>
    </location>
</feature>
<reference key="1">
    <citation type="journal article" date="2011" name="J. Bacteriol.">
        <title>Comparative genomics of 28 Salmonella enterica isolates: evidence for CRISPR-mediated adaptive sublineage evolution.</title>
        <authorList>
            <person name="Fricke W.F."/>
            <person name="Mammel M.K."/>
            <person name="McDermott P.F."/>
            <person name="Tartera C."/>
            <person name="White D.G."/>
            <person name="Leclerc J.E."/>
            <person name="Ravel J."/>
            <person name="Cebula T.A."/>
        </authorList>
    </citation>
    <scope>NUCLEOTIDE SEQUENCE [LARGE SCALE GENOMIC DNA]</scope>
    <source>
        <strain>CT_02021853</strain>
    </source>
</reference>
<comment type="subcellular location">
    <subcellularLocation>
        <location evidence="1">Cell membrane</location>
        <topology evidence="1">Multi-pass membrane protein</topology>
    </subcellularLocation>
</comment>
<comment type="similarity">
    <text evidence="1">Belongs to the UPF0391 family.</text>
</comment>